<keyword id="KW-0472">Membrane</keyword>
<keyword id="KW-0539">Nucleus</keyword>
<keyword id="KW-1185">Reference proteome</keyword>
<keyword id="KW-0812">Transmembrane</keyword>
<keyword id="KW-1133">Transmembrane helix</keyword>
<protein>
    <recommendedName>
        <fullName evidence="4">Protein CYSTEINE-RICH TRANSMEMBRANE MODULE 8</fullName>
        <shortName evidence="4">AthCYSTM8</shortName>
    </recommendedName>
</protein>
<comment type="function">
    <text evidence="4">Involved in resistance to abiotic stress.</text>
</comment>
<comment type="subcellular location">
    <subcellularLocation>
        <location evidence="1">Membrane</location>
        <topology evidence="1">Single-pass membrane protein</topology>
    </subcellularLocation>
    <subcellularLocation>
        <location evidence="3">Nucleus</location>
    </subcellularLocation>
</comment>
<comment type="tissue specificity">
    <text evidence="3">Mostly expressed in stems, siliques, roots and flowers and, to a lower extent, in leaves.</text>
</comment>
<comment type="induction">
    <text evidence="3">Induced by heat in shoots, but suppressed in roots (PubMed:29272523). Repressed in roots in response to cold, drought and salt (PubMed:29272523).</text>
</comment>
<comment type="similarity">
    <text evidence="5">Belongs to the CYSTM1 family.</text>
</comment>
<evidence type="ECO:0000255" key="1"/>
<evidence type="ECO:0000256" key="2">
    <source>
        <dbReference type="SAM" id="MobiDB-lite"/>
    </source>
</evidence>
<evidence type="ECO:0000269" key="3">
    <source>
    </source>
</evidence>
<evidence type="ECO:0000303" key="4">
    <source>
    </source>
</evidence>
<evidence type="ECO:0000305" key="5"/>
<evidence type="ECO:0000312" key="6">
    <source>
        <dbReference type="Araport" id="AT3G22235"/>
    </source>
</evidence>
<evidence type="ECO:0000312" key="7">
    <source>
        <dbReference type="EMBL" id="AP001306"/>
    </source>
</evidence>
<proteinExistence type="evidence at transcript level"/>
<sequence length="71" mass="7317">MNQSAQNYFSVQKPSETSSGPYTSPPPIGYPTRDAVVGDPPAAAVETNSKGVNPEGCCAAICCCCVLDACF</sequence>
<gene>
    <name evidence="4" type="primary">CYSTM8</name>
    <name evidence="6" type="ordered locus">At3g22235</name>
    <name evidence="7" type="ORF">MKA23</name>
</gene>
<organism>
    <name type="scientific">Arabidopsis thaliana</name>
    <name type="common">Mouse-ear cress</name>
    <dbReference type="NCBI Taxonomy" id="3702"/>
    <lineage>
        <taxon>Eukaryota</taxon>
        <taxon>Viridiplantae</taxon>
        <taxon>Streptophyta</taxon>
        <taxon>Embryophyta</taxon>
        <taxon>Tracheophyta</taxon>
        <taxon>Spermatophyta</taxon>
        <taxon>Magnoliopsida</taxon>
        <taxon>eudicotyledons</taxon>
        <taxon>Gunneridae</taxon>
        <taxon>Pentapetalae</taxon>
        <taxon>rosids</taxon>
        <taxon>malvids</taxon>
        <taxon>Brassicales</taxon>
        <taxon>Brassicaceae</taxon>
        <taxon>Camelineae</taxon>
        <taxon>Arabidopsis</taxon>
    </lineage>
</organism>
<dbReference type="EMBL" id="AP001306">
    <property type="status" value="NOT_ANNOTATED_CDS"/>
    <property type="molecule type" value="Genomic_DNA"/>
</dbReference>
<dbReference type="EMBL" id="CP002686">
    <property type="protein sequence ID" value="AEE76609.1"/>
    <property type="molecule type" value="Genomic_DNA"/>
</dbReference>
<dbReference type="EMBL" id="CP002686">
    <property type="protein sequence ID" value="AEE76610.1"/>
    <property type="molecule type" value="Genomic_DNA"/>
</dbReference>
<dbReference type="EMBL" id="AK119141">
    <property type="protein sequence ID" value="BAC43711.1"/>
    <property type="molecule type" value="mRNA"/>
</dbReference>
<dbReference type="EMBL" id="AY062802">
    <property type="protein sequence ID" value="AAL32880.1"/>
    <property type="molecule type" value="mRNA"/>
</dbReference>
<dbReference type="EMBL" id="AY081616">
    <property type="protein sequence ID" value="AAM10178.1"/>
    <property type="molecule type" value="mRNA"/>
</dbReference>
<dbReference type="RefSeq" id="NP_001154638.1">
    <property type="nucleotide sequence ID" value="NM_001161166.2"/>
</dbReference>
<dbReference type="RefSeq" id="NP_850623.4">
    <property type="nucleotide sequence ID" value="NM_180292.5"/>
</dbReference>
<dbReference type="FunCoup" id="Q8W472">
    <property type="interactions" value="12"/>
</dbReference>
<dbReference type="PaxDb" id="3702-AT3G22235.1"/>
<dbReference type="ProteomicsDB" id="252043"/>
<dbReference type="EnsemblPlants" id="AT3G22235.1">
    <property type="protein sequence ID" value="AT3G22235.1"/>
    <property type="gene ID" value="AT3G22235"/>
</dbReference>
<dbReference type="EnsemblPlants" id="AT3G22235.2">
    <property type="protein sequence ID" value="AT3G22235.2"/>
    <property type="gene ID" value="AT3G22235"/>
</dbReference>
<dbReference type="GeneID" id="821791"/>
<dbReference type="Gramene" id="AT3G22235.1">
    <property type="protein sequence ID" value="AT3G22235.1"/>
    <property type="gene ID" value="AT3G22235"/>
</dbReference>
<dbReference type="Gramene" id="AT3G22235.2">
    <property type="protein sequence ID" value="AT3G22235.2"/>
    <property type="gene ID" value="AT3G22235"/>
</dbReference>
<dbReference type="KEGG" id="ath:AT3G22235"/>
<dbReference type="Araport" id="AT3G22235"/>
<dbReference type="TAIR" id="AT3G22235">
    <property type="gene designation" value="ATHCYSTM8"/>
</dbReference>
<dbReference type="HOGENOM" id="CLU_128451_4_0_1"/>
<dbReference type="InParanoid" id="Q8W472"/>
<dbReference type="OMA" id="IVAILQY"/>
<dbReference type="PhylomeDB" id="Q8W472"/>
<dbReference type="PRO" id="PR:Q8W472"/>
<dbReference type="Proteomes" id="UP000006548">
    <property type="component" value="Chromosome 3"/>
</dbReference>
<dbReference type="GO" id="GO:0005829">
    <property type="term" value="C:cytosol"/>
    <property type="evidence" value="ECO:0007005"/>
    <property type="project" value="TAIR"/>
</dbReference>
<dbReference type="GO" id="GO:0005634">
    <property type="term" value="C:nucleus"/>
    <property type="evidence" value="ECO:0000314"/>
    <property type="project" value="UniProtKB"/>
</dbReference>
<dbReference type="GO" id="GO:0005886">
    <property type="term" value="C:plasma membrane"/>
    <property type="evidence" value="ECO:0007669"/>
    <property type="project" value="InterPro"/>
</dbReference>
<dbReference type="InterPro" id="IPR028144">
    <property type="entry name" value="CYSTM_dom"/>
</dbReference>
<dbReference type="InterPro" id="IPR044850">
    <property type="entry name" value="WIH1-like"/>
</dbReference>
<dbReference type="PANTHER" id="PTHR31568:SF122">
    <property type="entry name" value="PROTEIN CYSTEINE-RICH TRANSMEMBRANE MODULE 9"/>
    <property type="match status" value="1"/>
</dbReference>
<dbReference type="PANTHER" id="PTHR31568">
    <property type="entry name" value="RCG49325, ISOFORM CRA_A"/>
    <property type="match status" value="1"/>
</dbReference>
<dbReference type="Pfam" id="PF12734">
    <property type="entry name" value="CYSTM"/>
    <property type="match status" value="1"/>
</dbReference>
<name>CSTM8_ARATH</name>
<reference key="1">
    <citation type="journal article" date="2000" name="DNA Res.">
        <title>Structural analysis of Arabidopsis thaliana chromosome 3. II. Sequence features of the 4,251,695 bp regions covered by 90 P1, TAC and BAC clones.</title>
        <authorList>
            <person name="Kaneko T."/>
            <person name="Katoh T."/>
            <person name="Sato S."/>
            <person name="Nakamura Y."/>
            <person name="Asamizu E."/>
            <person name="Tabata S."/>
        </authorList>
    </citation>
    <scope>NUCLEOTIDE SEQUENCE [LARGE SCALE GENOMIC DNA]</scope>
    <source>
        <strain>cv. Columbia</strain>
    </source>
</reference>
<reference key="2">
    <citation type="journal article" date="2017" name="Plant J.">
        <title>Araport11: a complete reannotation of the Arabidopsis thaliana reference genome.</title>
        <authorList>
            <person name="Cheng C.Y."/>
            <person name="Krishnakumar V."/>
            <person name="Chan A.P."/>
            <person name="Thibaud-Nissen F."/>
            <person name="Schobel S."/>
            <person name="Town C.D."/>
        </authorList>
    </citation>
    <scope>GENOME REANNOTATION</scope>
    <source>
        <strain>cv. Columbia</strain>
    </source>
</reference>
<reference key="3">
    <citation type="journal article" date="2002" name="Science">
        <title>Functional annotation of a full-length Arabidopsis cDNA collection.</title>
        <authorList>
            <person name="Seki M."/>
            <person name="Narusaka M."/>
            <person name="Kamiya A."/>
            <person name="Ishida J."/>
            <person name="Satou M."/>
            <person name="Sakurai T."/>
            <person name="Nakajima M."/>
            <person name="Enju A."/>
            <person name="Akiyama K."/>
            <person name="Oono Y."/>
            <person name="Muramatsu M."/>
            <person name="Hayashizaki Y."/>
            <person name="Kawai J."/>
            <person name="Carninci P."/>
            <person name="Itoh M."/>
            <person name="Ishii Y."/>
            <person name="Arakawa T."/>
            <person name="Shibata K."/>
            <person name="Shinagawa A."/>
            <person name="Shinozaki K."/>
        </authorList>
    </citation>
    <scope>NUCLEOTIDE SEQUENCE [LARGE SCALE MRNA]</scope>
    <source>
        <strain>cv. Columbia</strain>
    </source>
</reference>
<reference key="4">
    <citation type="journal article" date="2003" name="Science">
        <title>Empirical analysis of transcriptional activity in the Arabidopsis genome.</title>
        <authorList>
            <person name="Yamada K."/>
            <person name="Lim J."/>
            <person name="Dale J.M."/>
            <person name="Chen H."/>
            <person name="Shinn P."/>
            <person name="Palm C.J."/>
            <person name="Southwick A.M."/>
            <person name="Wu H.C."/>
            <person name="Kim C.J."/>
            <person name="Nguyen M."/>
            <person name="Pham P.K."/>
            <person name="Cheuk R.F."/>
            <person name="Karlin-Newmann G."/>
            <person name="Liu S.X."/>
            <person name="Lam B."/>
            <person name="Sakano H."/>
            <person name="Wu T."/>
            <person name="Yu G."/>
            <person name="Miranda M."/>
            <person name="Quach H.L."/>
            <person name="Tripp M."/>
            <person name="Chang C.H."/>
            <person name="Lee J.M."/>
            <person name="Toriumi M.J."/>
            <person name="Chan M.M."/>
            <person name="Tang C.C."/>
            <person name="Onodera C.S."/>
            <person name="Deng J.M."/>
            <person name="Akiyama K."/>
            <person name="Ansari Y."/>
            <person name="Arakawa T."/>
            <person name="Banh J."/>
            <person name="Banno F."/>
            <person name="Bowser L."/>
            <person name="Brooks S.Y."/>
            <person name="Carninci P."/>
            <person name="Chao Q."/>
            <person name="Choy N."/>
            <person name="Enju A."/>
            <person name="Goldsmith A.D."/>
            <person name="Gurjal M."/>
            <person name="Hansen N.F."/>
            <person name="Hayashizaki Y."/>
            <person name="Johnson-Hopson C."/>
            <person name="Hsuan V.W."/>
            <person name="Iida K."/>
            <person name="Karnes M."/>
            <person name="Khan S."/>
            <person name="Koesema E."/>
            <person name="Ishida J."/>
            <person name="Jiang P.X."/>
            <person name="Jones T."/>
            <person name="Kawai J."/>
            <person name="Kamiya A."/>
            <person name="Meyers C."/>
            <person name="Nakajima M."/>
            <person name="Narusaka M."/>
            <person name="Seki M."/>
            <person name="Sakurai T."/>
            <person name="Satou M."/>
            <person name="Tamse R."/>
            <person name="Vaysberg M."/>
            <person name="Wallender E.K."/>
            <person name="Wong C."/>
            <person name="Yamamura Y."/>
            <person name="Yuan S."/>
            <person name="Shinozaki K."/>
            <person name="Davis R.W."/>
            <person name="Theologis A."/>
            <person name="Ecker J.R."/>
        </authorList>
    </citation>
    <scope>NUCLEOTIDE SEQUENCE [LARGE SCALE MRNA]</scope>
    <source>
        <strain>cv. Columbia</strain>
    </source>
</reference>
<reference key="5">
    <citation type="journal article" date="2018" name="Plant Cell Physiol.">
        <title>CYSTM, a novel non-secreted cysteine-rich peptide family, involved in environmental stresses in Arabidopsis thaliana.</title>
        <authorList>
            <person name="Xu Y."/>
            <person name="Yu Z."/>
            <person name="Zhang D."/>
            <person name="Huang J."/>
            <person name="Wu C."/>
            <person name="Yang G."/>
            <person name="Yan K."/>
            <person name="Zhang S."/>
            <person name="Zheng C."/>
        </authorList>
    </citation>
    <scope>FUNCTION</scope>
    <scope>TISSUE SPECIFICITY</scope>
    <scope>INDUCTION BY SALT; HEAT; COLD AND DROUGHT</scope>
    <scope>SUBCELLULAR LOCATION</scope>
    <source>
        <strain>cv. Columbia</strain>
    </source>
</reference>
<feature type="chain" id="PRO_0000454805" description="Protein CYSTEINE-RICH TRANSMEMBRANE MODULE 8">
    <location>
        <begin position="1"/>
        <end position="71"/>
    </location>
</feature>
<feature type="transmembrane region" description="Helical" evidence="1">
    <location>
        <begin position="48"/>
        <end position="64"/>
    </location>
</feature>
<feature type="region of interest" description="Disordered" evidence="2">
    <location>
        <begin position="1"/>
        <end position="35"/>
    </location>
</feature>
<feature type="compositionally biased region" description="Polar residues" evidence="2">
    <location>
        <begin position="1"/>
        <end position="22"/>
    </location>
</feature>
<accession>Q8W472</accession>